<dbReference type="EC" id="3.4.24.-" evidence="1"/>
<dbReference type="EMBL" id="L77117">
    <property type="protein sequence ID" value="AAB99703.1"/>
    <property type="molecule type" value="Genomic_DNA"/>
</dbReference>
<dbReference type="PIR" id="H64509">
    <property type="entry name" value="H64509"/>
</dbReference>
<dbReference type="RefSeq" id="WP_010871206.1">
    <property type="nucleotide sequence ID" value="NC_000909.1"/>
</dbReference>
<dbReference type="SMR" id="Q59076"/>
<dbReference type="FunCoup" id="Q59076">
    <property type="interactions" value="2"/>
</dbReference>
<dbReference type="STRING" id="243232.MJ_1682"/>
<dbReference type="PaxDb" id="243232-MJ_1682"/>
<dbReference type="EnsemblBacteria" id="AAB99703">
    <property type="protein sequence ID" value="AAB99703"/>
    <property type="gene ID" value="MJ_1682"/>
</dbReference>
<dbReference type="GeneID" id="1452591"/>
<dbReference type="KEGG" id="mja:MJ_1682"/>
<dbReference type="eggNOG" id="arCOG01331">
    <property type="taxonomic scope" value="Archaea"/>
</dbReference>
<dbReference type="HOGENOM" id="CLU_042266_3_0_2"/>
<dbReference type="InParanoid" id="Q59076"/>
<dbReference type="OrthoDB" id="28389at2157"/>
<dbReference type="PhylomeDB" id="Q59076"/>
<dbReference type="Proteomes" id="UP000000805">
    <property type="component" value="Chromosome"/>
</dbReference>
<dbReference type="GO" id="GO:0005886">
    <property type="term" value="C:plasma membrane"/>
    <property type="evidence" value="ECO:0007669"/>
    <property type="project" value="UniProtKB-SubCell"/>
</dbReference>
<dbReference type="GO" id="GO:0004222">
    <property type="term" value="F:metalloendopeptidase activity"/>
    <property type="evidence" value="ECO:0007669"/>
    <property type="project" value="UniProtKB-UniRule"/>
</dbReference>
<dbReference type="GO" id="GO:0008270">
    <property type="term" value="F:zinc ion binding"/>
    <property type="evidence" value="ECO:0007669"/>
    <property type="project" value="UniProtKB-UniRule"/>
</dbReference>
<dbReference type="GO" id="GO:0006508">
    <property type="term" value="P:proteolysis"/>
    <property type="evidence" value="ECO:0007669"/>
    <property type="project" value="UniProtKB-KW"/>
</dbReference>
<dbReference type="CDD" id="cd07336">
    <property type="entry name" value="M48B_HtpX_like"/>
    <property type="match status" value="1"/>
</dbReference>
<dbReference type="Gene3D" id="3.30.2010.10">
    <property type="entry name" value="Metalloproteases ('zincins'), catalytic domain"/>
    <property type="match status" value="1"/>
</dbReference>
<dbReference type="HAMAP" id="MF_00188">
    <property type="entry name" value="Pept_M48_protease_HtpX"/>
    <property type="match status" value="1"/>
</dbReference>
<dbReference type="InterPro" id="IPR050083">
    <property type="entry name" value="HtpX_protease"/>
</dbReference>
<dbReference type="InterPro" id="IPR022919">
    <property type="entry name" value="Pept_M48_protease_HtpX"/>
</dbReference>
<dbReference type="InterPro" id="IPR001915">
    <property type="entry name" value="Peptidase_M48"/>
</dbReference>
<dbReference type="PANTHER" id="PTHR43221">
    <property type="entry name" value="PROTEASE HTPX"/>
    <property type="match status" value="1"/>
</dbReference>
<dbReference type="PANTHER" id="PTHR43221:SF2">
    <property type="entry name" value="PROTEASE HTPX HOMOLOG"/>
    <property type="match status" value="1"/>
</dbReference>
<dbReference type="Pfam" id="PF01435">
    <property type="entry name" value="Peptidase_M48"/>
    <property type="match status" value="1"/>
</dbReference>
<gene>
    <name evidence="1" type="primary">htpX</name>
    <name type="ordered locus">MJ1682</name>
</gene>
<proteinExistence type="inferred from homology"/>
<reference key="1">
    <citation type="journal article" date="1996" name="Science">
        <title>Complete genome sequence of the methanogenic archaeon, Methanococcus jannaschii.</title>
        <authorList>
            <person name="Bult C.J."/>
            <person name="White O."/>
            <person name="Olsen G.J."/>
            <person name="Zhou L."/>
            <person name="Fleischmann R.D."/>
            <person name="Sutton G.G."/>
            <person name="Blake J.A."/>
            <person name="FitzGerald L.M."/>
            <person name="Clayton R.A."/>
            <person name="Gocayne J.D."/>
            <person name="Kerlavage A.R."/>
            <person name="Dougherty B.A."/>
            <person name="Tomb J.-F."/>
            <person name="Adams M.D."/>
            <person name="Reich C.I."/>
            <person name="Overbeek R."/>
            <person name="Kirkness E.F."/>
            <person name="Weinstock K.G."/>
            <person name="Merrick J.M."/>
            <person name="Glodek A."/>
            <person name="Scott J.L."/>
            <person name="Geoghagen N.S.M."/>
            <person name="Weidman J.F."/>
            <person name="Fuhrmann J.L."/>
            <person name="Nguyen D."/>
            <person name="Utterback T.R."/>
            <person name="Kelley J.M."/>
            <person name="Peterson J.D."/>
            <person name="Sadow P.W."/>
            <person name="Hanna M.C."/>
            <person name="Cotton M.D."/>
            <person name="Roberts K.M."/>
            <person name="Hurst M.A."/>
            <person name="Kaine B.P."/>
            <person name="Borodovsky M."/>
            <person name="Klenk H.-P."/>
            <person name="Fraser C.M."/>
            <person name="Smith H.O."/>
            <person name="Woese C.R."/>
            <person name="Venter J.C."/>
        </authorList>
    </citation>
    <scope>NUCLEOTIDE SEQUENCE [LARGE SCALE GENOMIC DNA]</scope>
    <source>
        <strain>ATCC 43067 / DSM 2661 / JAL-1 / JCM 10045 / NBRC 100440</strain>
    </source>
</reference>
<sequence length="284" mass="31972">MINQIKTYLLMALLVGLIYAICMMLHIHPLIAIILALIPNVIAYYMSDKLVLMSYNARILEEHEMPWLHQMVERVARKAGLPKPKVAIVPTETPNAFATGRNPENAVVAVTEGILKLLSPEELEGVIGHEISHIKHRDILISTIVATLAGAIVMIAEWMLYWGGIFFVSEEEESNPLELIGTILLLILAPIAATIIQFAISRQREFYADEEGAKLTHPLWLANALAKLERGVELYPLERGNPATAHMFIINPFRKDFIAKLFSTHPPTEERIERLLEMCKRIGK</sequence>
<comment type="cofactor">
    <cofactor evidence="1">
        <name>Zn(2+)</name>
        <dbReference type="ChEBI" id="CHEBI:29105"/>
    </cofactor>
    <text evidence="1">Binds 1 zinc ion per subunit.</text>
</comment>
<comment type="subcellular location">
    <subcellularLocation>
        <location evidence="1">Cell membrane</location>
        <topology evidence="1">Multi-pass membrane protein</topology>
    </subcellularLocation>
</comment>
<comment type="similarity">
    <text evidence="1">Belongs to the peptidase M48B family.</text>
</comment>
<name>HTPX_METJA</name>
<evidence type="ECO:0000255" key="1">
    <source>
        <dbReference type="HAMAP-Rule" id="MF_00188"/>
    </source>
</evidence>
<protein>
    <recommendedName>
        <fullName evidence="1">Protease HtpX homolog</fullName>
        <ecNumber evidence="1">3.4.24.-</ecNumber>
    </recommendedName>
</protein>
<feature type="chain" id="PRO_0000138917" description="Protease HtpX homolog">
    <location>
        <begin position="1"/>
        <end position="284"/>
    </location>
</feature>
<feature type="transmembrane region" description="Helical" evidence="1">
    <location>
        <begin position="7"/>
        <end position="26"/>
    </location>
</feature>
<feature type="transmembrane region" description="Helical" evidence="1">
    <location>
        <begin position="33"/>
        <end position="47"/>
    </location>
</feature>
<feature type="transmembrane region" description="Helical" evidence="1">
    <location>
        <begin position="148"/>
        <end position="168"/>
    </location>
</feature>
<feature type="transmembrane region" description="Helical" evidence="1">
    <location>
        <begin position="180"/>
        <end position="200"/>
    </location>
</feature>
<feature type="active site" evidence="1">
    <location>
        <position position="130"/>
    </location>
</feature>
<feature type="binding site" evidence="1">
    <location>
        <position position="129"/>
    </location>
    <ligand>
        <name>Zn(2+)</name>
        <dbReference type="ChEBI" id="CHEBI:29105"/>
        <note>catalytic</note>
    </ligand>
</feature>
<feature type="binding site" evidence="1">
    <location>
        <position position="133"/>
    </location>
    <ligand>
        <name>Zn(2+)</name>
        <dbReference type="ChEBI" id="CHEBI:29105"/>
        <note>catalytic</note>
    </ligand>
</feature>
<feature type="binding site" evidence="1">
    <location>
        <position position="205"/>
    </location>
    <ligand>
        <name>Zn(2+)</name>
        <dbReference type="ChEBI" id="CHEBI:29105"/>
        <note>catalytic</note>
    </ligand>
</feature>
<organism>
    <name type="scientific">Methanocaldococcus jannaschii (strain ATCC 43067 / DSM 2661 / JAL-1 / JCM 10045 / NBRC 100440)</name>
    <name type="common">Methanococcus jannaschii</name>
    <dbReference type="NCBI Taxonomy" id="243232"/>
    <lineage>
        <taxon>Archaea</taxon>
        <taxon>Methanobacteriati</taxon>
        <taxon>Methanobacteriota</taxon>
        <taxon>Methanomada group</taxon>
        <taxon>Methanococci</taxon>
        <taxon>Methanococcales</taxon>
        <taxon>Methanocaldococcaceae</taxon>
        <taxon>Methanocaldococcus</taxon>
    </lineage>
</organism>
<keyword id="KW-1003">Cell membrane</keyword>
<keyword id="KW-0378">Hydrolase</keyword>
<keyword id="KW-0472">Membrane</keyword>
<keyword id="KW-0479">Metal-binding</keyword>
<keyword id="KW-0482">Metalloprotease</keyword>
<keyword id="KW-0645">Protease</keyword>
<keyword id="KW-1185">Reference proteome</keyword>
<keyword id="KW-0812">Transmembrane</keyword>
<keyword id="KW-1133">Transmembrane helix</keyword>
<keyword id="KW-0862">Zinc</keyword>
<accession>Q59076</accession>